<name>MURG_ECOL5</name>
<gene>
    <name evidence="1" type="primary">murG</name>
    <name type="ordered locus">ECP_0092</name>
</gene>
<proteinExistence type="inferred from homology"/>
<dbReference type="EC" id="2.4.1.227" evidence="1"/>
<dbReference type="EMBL" id="CP000247">
    <property type="protein sequence ID" value="ABG68132.1"/>
    <property type="molecule type" value="Genomic_DNA"/>
</dbReference>
<dbReference type="RefSeq" id="WP_000016564.1">
    <property type="nucleotide sequence ID" value="NC_008253.1"/>
</dbReference>
<dbReference type="SMR" id="Q0TLP9"/>
<dbReference type="CAZy" id="GT28">
    <property type="family name" value="Glycosyltransferase Family 28"/>
</dbReference>
<dbReference type="KEGG" id="ecp:ECP_0092"/>
<dbReference type="HOGENOM" id="CLU_037404_2_0_6"/>
<dbReference type="UniPathway" id="UPA00219"/>
<dbReference type="Proteomes" id="UP000009182">
    <property type="component" value="Chromosome"/>
</dbReference>
<dbReference type="GO" id="GO:0005886">
    <property type="term" value="C:plasma membrane"/>
    <property type="evidence" value="ECO:0007669"/>
    <property type="project" value="UniProtKB-SubCell"/>
</dbReference>
<dbReference type="GO" id="GO:0051991">
    <property type="term" value="F:UDP-N-acetyl-D-glucosamine:N-acetylmuramoyl-L-alanyl-D-glutamyl-meso-2,6-diaminopimelyl-D-alanyl-D-alanine-diphosphoundecaprenol 4-beta-N-acetylglucosaminlytransferase activity"/>
    <property type="evidence" value="ECO:0007669"/>
    <property type="project" value="RHEA"/>
</dbReference>
<dbReference type="GO" id="GO:0050511">
    <property type="term" value="F:undecaprenyldiphospho-muramoylpentapeptide beta-N-acetylglucosaminyltransferase activity"/>
    <property type="evidence" value="ECO:0007669"/>
    <property type="project" value="UniProtKB-UniRule"/>
</dbReference>
<dbReference type="GO" id="GO:0005975">
    <property type="term" value="P:carbohydrate metabolic process"/>
    <property type="evidence" value="ECO:0007669"/>
    <property type="project" value="InterPro"/>
</dbReference>
<dbReference type="GO" id="GO:0051301">
    <property type="term" value="P:cell division"/>
    <property type="evidence" value="ECO:0007669"/>
    <property type="project" value="UniProtKB-KW"/>
</dbReference>
<dbReference type="GO" id="GO:0071555">
    <property type="term" value="P:cell wall organization"/>
    <property type="evidence" value="ECO:0007669"/>
    <property type="project" value="UniProtKB-KW"/>
</dbReference>
<dbReference type="GO" id="GO:0030259">
    <property type="term" value="P:lipid glycosylation"/>
    <property type="evidence" value="ECO:0007669"/>
    <property type="project" value="UniProtKB-UniRule"/>
</dbReference>
<dbReference type="GO" id="GO:0009252">
    <property type="term" value="P:peptidoglycan biosynthetic process"/>
    <property type="evidence" value="ECO:0007669"/>
    <property type="project" value="UniProtKB-UniRule"/>
</dbReference>
<dbReference type="GO" id="GO:0008360">
    <property type="term" value="P:regulation of cell shape"/>
    <property type="evidence" value="ECO:0007669"/>
    <property type="project" value="UniProtKB-KW"/>
</dbReference>
<dbReference type="CDD" id="cd03785">
    <property type="entry name" value="GT28_MurG"/>
    <property type="match status" value="1"/>
</dbReference>
<dbReference type="FunFam" id="3.40.50.2000:FF:000016">
    <property type="entry name" value="UDP-N-acetylglucosamine--N-acetylmuramyl-(pentapeptide) pyrophosphoryl-undecaprenol N-acetylglucosamine transferase"/>
    <property type="match status" value="1"/>
</dbReference>
<dbReference type="FunFam" id="3.40.50.2000:FF:000018">
    <property type="entry name" value="UDP-N-acetylglucosamine--N-acetylmuramyl-(pentapeptide) pyrophosphoryl-undecaprenol N-acetylglucosamine transferase"/>
    <property type="match status" value="1"/>
</dbReference>
<dbReference type="Gene3D" id="3.40.50.2000">
    <property type="entry name" value="Glycogen Phosphorylase B"/>
    <property type="match status" value="2"/>
</dbReference>
<dbReference type="HAMAP" id="MF_00033">
    <property type="entry name" value="MurG"/>
    <property type="match status" value="1"/>
</dbReference>
<dbReference type="InterPro" id="IPR006009">
    <property type="entry name" value="GlcNAc_MurG"/>
</dbReference>
<dbReference type="InterPro" id="IPR007235">
    <property type="entry name" value="Glyco_trans_28_C"/>
</dbReference>
<dbReference type="InterPro" id="IPR004276">
    <property type="entry name" value="GlycoTrans_28_N"/>
</dbReference>
<dbReference type="NCBIfam" id="TIGR01133">
    <property type="entry name" value="murG"/>
    <property type="match status" value="1"/>
</dbReference>
<dbReference type="PANTHER" id="PTHR21015:SF22">
    <property type="entry name" value="GLYCOSYLTRANSFERASE"/>
    <property type="match status" value="1"/>
</dbReference>
<dbReference type="PANTHER" id="PTHR21015">
    <property type="entry name" value="UDP-N-ACETYLGLUCOSAMINE--N-ACETYLMURAMYL-(PENTAPEPTIDE) PYROPHOSPHORYL-UNDECAPRENOL N-ACETYLGLUCOSAMINE TRANSFERASE 1"/>
    <property type="match status" value="1"/>
</dbReference>
<dbReference type="Pfam" id="PF04101">
    <property type="entry name" value="Glyco_tran_28_C"/>
    <property type="match status" value="1"/>
</dbReference>
<dbReference type="Pfam" id="PF03033">
    <property type="entry name" value="Glyco_transf_28"/>
    <property type="match status" value="1"/>
</dbReference>
<dbReference type="SUPFAM" id="SSF53756">
    <property type="entry name" value="UDP-Glycosyltransferase/glycogen phosphorylase"/>
    <property type="match status" value="1"/>
</dbReference>
<comment type="function">
    <text evidence="1">Cell wall formation. Catalyzes the transfer of a GlcNAc subunit on undecaprenyl-pyrophosphoryl-MurNAc-pentapeptide (lipid intermediate I) to form undecaprenyl-pyrophosphoryl-MurNAc-(pentapeptide)GlcNAc (lipid intermediate II).</text>
</comment>
<comment type="catalytic activity">
    <reaction evidence="1">
        <text>di-trans,octa-cis-undecaprenyl diphospho-N-acetyl-alpha-D-muramoyl-L-alanyl-D-glutamyl-meso-2,6-diaminopimeloyl-D-alanyl-D-alanine + UDP-N-acetyl-alpha-D-glucosamine = di-trans,octa-cis-undecaprenyl diphospho-[N-acetyl-alpha-D-glucosaminyl-(1-&gt;4)]-N-acetyl-alpha-D-muramoyl-L-alanyl-D-glutamyl-meso-2,6-diaminopimeloyl-D-alanyl-D-alanine + UDP + H(+)</text>
        <dbReference type="Rhea" id="RHEA:31227"/>
        <dbReference type="ChEBI" id="CHEBI:15378"/>
        <dbReference type="ChEBI" id="CHEBI:57705"/>
        <dbReference type="ChEBI" id="CHEBI:58223"/>
        <dbReference type="ChEBI" id="CHEBI:61387"/>
        <dbReference type="ChEBI" id="CHEBI:61388"/>
        <dbReference type="EC" id="2.4.1.227"/>
    </reaction>
</comment>
<comment type="pathway">
    <text evidence="1">Cell wall biogenesis; peptidoglycan biosynthesis.</text>
</comment>
<comment type="subcellular location">
    <subcellularLocation>
        <location evidence="1">Cell inner membrane</location>
        <topology evidence="1">Peripheral membrane protein</topology>
        <orientation evidence="1">Cytoplasmic side</orientation>
    </subcellularLocation>
</comment>
<comment type="similarity">
    <text evidence="1">Belongs to the glycosyltransferase 28 family. MurG subfamily.</text>
</comment>
<protein>
    <recommendedName>
        <fullName evidence="1">UDP-N-acetylglucosamine--N-acetylmuramyl-(pentapeptide) pyrophosphoryl-undecaprenol N-acetylglucosamine transferase</fullName>
        <ecNumber evidence="1">2.4.1.227</ecNumber>
    </recommendedName>
    <alternativeName>
        <fullName evidence="1">Undecaprenyl-PP-MurNAc-pentapeptide-UDPGlcNAc GlcNAc transferase</fullName>
    </alternativeName>
</protein>
<accession>Q0TLP9</accession>
<feature type="chain" id="PRO_1000002642" description="UDP-N-acetylglucosamine--N-acetylmuramyl-(pentapeptide) pyrophosphoryl-undecaprenol N-acetylglucosamine transferase">
    <location>
        <begin position="1"/>
        <end position="355"/>
    </location>
</feature>
<feature type="binding site" evidence="1">
    <location>
        <begin position="15"/>
        <end position="17"/>
    </location>
    <ligand>
        <name>UDP-N-acetyl-alpha-D-glucosamine</name>
        <dbReference type="ChEBI" id="CHEBI:57705"/>
    </ligand>
</feature>
<feature type="binding site" evidence="1">
    <location>
        <position position="127"/>
    </location>
    <ligand>
        <name>UDP-N-acetyl-alpha-D-glucosamine</name>
        <dbReference type="ChEBI" id="CHEBI:57705"/>
    </ligand>
</feature>
<feature type="binding site" evidence="1">
    <location>
        <position position="163"/>
    </location>
    <ligand>
        <name>UDP-N-acetyl-alpha-D-glucosamine</name>
        <dbReference type="ChEBI" id="CHEBI:57705"/>
    </ligand>
</feature>
<feature type="binding site" evidence="1">
    <location>
        <position position="191"/>
    </location>
    <ligand>
        <name>UDP-N-acetyl-alpha-D-glucosamine</name>
        <dbReference type="ChEBI" id="CHEBI:57705"/>
    </ligand>
</feature>
<feature type="binding site" evidence="1">
    <location>
        <position position="244"/>
    </location>
    <ligand>
        <name>UDP-N-acetyl-alpha-D-glucosamine</name>
        <dbReference type="ChEBI" id="CHEBI:57705"/>
    </ligand>
</feature>
<feature type="binding site" evidence="1">
    <location>
        <begin position="263"/>
        <end position="268"/>
    </location>
    <ligand>
        <name>UDP-N-acetyl-alpha-D-glucosamine</name>
        <dbReference type="ChEBI" id="CHEBI:57705"/>
    </ligand>
</feature>
<feature type="binding site" evidence="1">
    <location>
        <position position="288"/>
    </location>
    <ligand>
        <name>UDP-N-acetyl-alpha-D-glucosamine</name>
        <dbReference type="ChEBI" id="CHEBI:57705"/>
    </ligand>
</feature>
<keyword id="KW-0131">Cell cycle</keyword>
<keyword id="KW-0132">Cell division</keyword>
<keyword id="KW-0997">Cell inner membrane</keyword>
<keyword id="KW-1003">Cell membrane</keyword>
<keyword id="KW-0133">Cell shape</keyword>
<keyword id="KW-0961">Cell wall biogenesis/degradation</keyword>
<keyword id="KW-0328">Glycosyltransferase</keyword>
<keyword id="KW-0472">Membrane</keyword>
<keyword id="KW-0573">Peptidoglycan synthesis</keyword>
<keyword id="KW-0808">Transferase</keyword>
<sequence length="355" mass="37777">MSGQGKRLMVMAGGTGGHVFPGLAVAHHLMAQGWQVRWLGTADRMEADLVPKHGIEIDFIRISGLRGKGIKALIAAPLRIFNAWRQARAIMKAYKPDVVLGMGGYVSGPGGLAAWSLGIPVVLHEQNGIAGLTNKWLAKIATKVMQAFPGAFPNAEVVGNPVRTDVLALPLPQQRLAGREGPVRVLVVGGSQGARILNQTMPQVAAKLGDSVTIWHQSGKGSQQSVEQAYAEAGQPQHKVTEFIDDMAAAYAWADVVVCRSGALTVSEIAAAGLPALFVPFQHKDRQQYWNALPLEKAGAAKIIEQSQLSVDAVANTLAGWSRETLLTMAERARAASIPDATERVANEVSRAARA</sequence>
<organism>
    <name type="scientific">Escherichia coli O6:K15:H31 (strain 536 / UPEC)</name>
    <dbReference type="NCBI Taxonomy" id="362663"/>
    <lineage>
        <taxon>Bacteria</taxon>
        <taxon>Pseudomonadati</taxon>
        <taxon>Pseudomonadota</taxon>
        <taxon>Gammaproteobacteria</taxon>
        <taxon>Enterobacterales</taxon>
        <taxon>Enterobacteriaceae</taxon>
        <taxon>Escherichia</taxon>
    </lineage>
</organism>
<evidence type="ECO:0000255" key="1">
    <source>
        <dbReference type="HAMAP-Rule" id="MF_00033"/>
    </source>
</evidence>
<reference key="1">
    <citation type="journal article" date="2006" name="Mol. Microbiol.">
        <title>Role of pathogenicity island-associated integrases in the genome plasticity of uropathogenic Escherichia coli strain 536.</title>
        <authorList>
            <person name="Hochhut B."/>
            <person name="Wilde C."/>
            <person name="Balling G."/>
            <person name="Middendorf B."/>
            <person name="Dobrindt U."/>
            <person name="Brzuszkiewicz E."/>
            <person name="Gottschalk G."/>
            <person name="Carniel E."/>
            <person name="Hacker J."/>
        </authorList>
    </citation>
    <scope>NUCLEOTIDE SEQUENCE [LARGE SCALE GENOMIC DNA]</scope>
    <source>
        <strain>536 / UPEC</strain>
    </source>
</reference>